<accession>Q5GY22</accession>
<evidence type="ECO:0000255" key="1">
    <source>
        <dbReference type="HAMAP-Rule" id="MF_00686"/>
    </source>
</evidence>
<evidence type="ECO:0000305" key="2"/>
<gene>
    <name type="ordered locus">XOO3145</name>
</gene>
<dbReference type="EMBL" id="AE013598">
    <property type="protein sequence ID" value="AAW76399.1"/>
    <property type="status" value="ALT_INIT"/>
    <property type="molecule type" value="Genomic_DNA"/>
</dbReference>
<dbReference type="SMR" id="Q5GY22"/>
<dbReference type="STRING" id="291331.XOO3145"/>
<dbReference type="KEGG" id="xoo:XOO3145"/>
<dbReference type="HOGENOM" id="CLU_170994_0_0_6"/>
<dbReference type="Proteomes" id="UP000006735">
    <property type="component" value="Chromosome"/>
</dbReference>
<dbReference type="GO" id="GO:0005829">
    <property type="term" value="C:cytosol"/>
    <property type="evidence" value="ECO:0007669"/>
    <property type="project" value="TreeGrafter"/>
</dbReference>
<dbReference type="GO" id="GO:0005506">
    <property type="term" value="F:iron ion binding"/>
    <property type="evidence" value="ECO:0007669"/>
    <property type="project" value="UniProtKB-UniRule"/>
</dbReference>
<dbReference type="GO" id="GO:0034599">
    <property type="term" value="P:cellular response to oxidative stress"/>
    <property type="evidence" value="ECO:0007669"/>
    <property type="project" value="TreeGrafter"/>
</dbReference>
<dbReference type="FunFam" id="1.10.3880.10:FF:000001">
    <property type="entry name" value="Probable Fe(2+)-trafficking protein"/>
    <property type="match status" value="1"/>
</dbReference>
<dbReference type="Gene3D" id="1.10.3880.10">
    <property type="entry name" value="Fe(II) trafficking protein YggX"/>
    <property type="match status" value="1"/>
</dbReference>
<dbReference type="HAMAP" id="MF_00686">
    <property type="entry name" value="Fe_traffic_YggX"/>
    <property type="match status" value="1"/>
</dbReference>
<dbReference type="InterPro" id="IPR007457">
    <property type="entry name" value="Fe_traffick_prot_YggX"/>
</dbReference>
<dbReference type="InterPro" id="IPR036766">
    <property type="entry name" value="Fe_traffick_prot_YggX_sf"/>
</dbReference>
<dbReference type="NCBIfam" id="NF003817">
    <property type="entry name" value="PRK05408.1"/>
    <property type="match status" value="1"/>
</dbReference>
<dbReference type="PANTHER" id="PTHR36965">
    <property type="entry name" value="FE(2+)-TRAFFICKING PROTEIN-RELATED"/>
    <property type="match status" value="1"/>
</dbReference>
<dbReference type="PANTHER" id="PTHR36965:SF1">
    <property type="entry name" value="FE(2+)-TRAFFICKING PROTEIN-RELATED"/>
    <property type="match status" value="1"/>
</dbReference>
<dbReference type="Pfam" id="PF04362">
    <property type="entry name" value="Iron_traffic"/>
    <property type="match status" value="1"/>
</dbReference>
<dbReference type="PIRSF" id="PIRSF029827">
    <property type="entry name" value="Fe_traffic_YggX"/>
    <property type="match status" value="1"/>
</dbReference>
<dbReference type="SUPFAM" id="SSF111148">
    <property type="entry name" value="YggX-like"/>
    <property type="match status" value="1"/>
</dbReference>
<sequence>MSRTVFCHYQQSDAEGLDFVPYPGELGQRIFAHIGKTAWQAWLAHQTMLINENRLSPRDPKHRAFLETELQKFLFERNADKPDGYVAPLGEE</sequence>
<proteinExistence type="inferred from homology"/>
<organism>
    <name type="scientific">Xanthomonas oryzae pv. oryzae (strain KACC10331 / KXO85)</name>
    <dbReference type="NCBI Taxonomy" id="291331"/>
    <lineage>
        <taxon>Bacteria</taxon>
        <taxon>Pseudomonadati</taxon>
        <taxon>Pseudomonadota</taxon>
        <taxon>Gammaproteobacteria</taxon>
        <taxon>Lysobacterales</taxon>
        <taxon>Lysobacteraceae</taxon>
        <taxon>Xanthomonas</taxon>
    </lineage>
</organism>
<feature type="chain" id="PRO_0000214516" description="Probable Fe(2+)-trafficking protein">
    <location>
        <begin position="1"/>
        <end position="92"/>
    </location>
</feature>
<protein>
    <recommendedName>
        <fullName evidence="1">Probable Fe(2+)-trafficking protein</fullName>
    </recommendedName>
</protein>
<comment type="function">
    <text evidence="1">Could be a mediator in iron transactions between iron acquisition and iron-requiring processes, such as synthesis and/or repair of Fe-S clusters in biosynthetic enzymes.</text>
</comment>
<comment type="similarity">
    <text evidence="1">Belongs to the Fe(2+)-trafficking protein family.</text>
</comment>
<comment type="sequence caution" evidence="2">
    <conflict type="erroneous initiation">
        <sequence resource="EMBL-CDS" id="AAW76399"/>
    </conflict>
</comment>
<keyword id="KW-0408">Iron</keyword>
<keyword id="KW-1185">Reference proteome</keyword>
<name>FETP_XANOR</name>
<reference key="1">
    <citation type="journal article" date="2005" name="Nucleic Acids Res.">
        <title>The genome sequence of Xanthomonas oryzae pathovar oryzae KACC10331, the bacterial blight pathogen of rice.</title>
        <authorList>
            <person name="Lee B.-M."/>
            <person name="Park Y.-J."/>
            <person name="Park D.-S."/>
            <person name="Kang H.-W."/>
            <person name="Kim J.-G."/>
            <person name="Song E.-S."/>
            <person name="Park I.-C."/>
            <person name="Yoon U.-H."/>
            <person name="Hahn J.-H."/>
            <person name="Koo B.-S."/>
            <person name="Lee G.-B."/>
            <person name="Kim H."/>
            <person name="Park H.-S."/>
            <person name="Yoon K.-O."/>
            <person name="Kim J.-H."/>
            <person name="Jung C.-H."/>
            <person name="Koh N.-H."/>
            <person name="Seo J.-S."/>
            <person name="Go S.-J."/>
        </authorList>
    </citation>
    <scope>NUCLEOTIDE SEQUENCE [LARGE SCALE GENOMIC DNA]</scope>
    <source>
        <strain>KACC10331 / KXO85</strain>
    </source>
</reference>